<organism>
    <name type="scientific">Saccharomyces cerevisiae (strain ATCC 204508 / S288c)</name>
    <name type="common">Baker's yeast</name>
    <dbReference type="NCBI Taxonomy" id="559292"/>
    <lineage>
        <taxon>Eukaryota</taxon>
        <taxon>Fungi</taxon>
        <taxon>Dikarya</taxon>
        <taxon>Ascomycota</taxon>
        <taxon>Saccharomycotina</taxon>
        <taxon>Saccharomycetes</taxon>
        <taxon>Saccharomycetales</taxon>
        <taxon>Saccharomycetaceae</taxon>
        <taxon>Saccharomyces</taxon>
    </lineage>
</organism>
<gene>
    <name type="primary">PBP2</name>
    <name type="ordered locus">YBR233W</name>
    <name type="ORF">YBR1531</name>
</gene>
<proteinExistence type="evidence at protein level"/>
<comment type="subunit">
    <text>Interacts with PAB1.</text>
</comment>
<comment type="subcellular location">
    <subcellularLocation>
        <location evidence="4">Nucleus</location>
    </subcellularLocation>
</comment>
<comment type="miscellaneous">
    <text evidence="3">Present with 1590 molecules/cell in log phase SD medium.</text>
</comment>
<keyword id="KW-0539">Nucleus</keyword>
<keyword id="KW-1185">Reference proteome</keyword>
<keyword id="KW-0677">Repeat</keyword>
<keyword id="KW-0687">Ribonucleoprotein</keyword>
<keyword id="KW-0694">RNA-binding</keyword>
<protein>
    <recommendedName>
        <fullName>PAB1-binding protein 2</fullName>
    </recommendedName>
</protein>
<sequence>MSTETTKPSITTTPTTVLVSPNTLKRKKGEDTSEEQLEAEIKRVALKDADSHSDNDHDSPDNVPSDVHLRMLCLVKHASLIVGHKGATISRIKSETSARINISNNIRGVPERIVYVRGTCDDVAKAYGMIVRALLEEHGNEDNGEDIEISINLLIPHHLMGCIIGKRGSRLREIEDLSAAKLFASPNQLLLSNDRILTINGVPDAIHIATFYISQTLLNFQMESPQKNVKRSIYYQPTQFNSVLIDHSQPNTIFHQRNHQYHPSDKLLSYKPNKNLPISSTLLSMATPQYTTASVANATAFQPNFVIPNVTVLDGPVISPAPGNHLLMNFVQQEIFIDEKFVGNVIGKDGKHINSVKESTGCSIIIQDPVEGSSERRLTIRGTFMASQAAIMLISNKIEIDRSNAERKRRSPL</sequence>
<evidence type="ECO:0000255" key="1">
    <source>
        <dbReference type="PROSITE-ProRule" id="PRU00117"/>
    </source>
</evidence>
<evidence type="ECO:0000256" key="2">
    <source>
        <dbReference type="SAM" id="MobiDB-lite"/>
    </source>
</evidence>
<evidence type="ECO:0000269" key="3">
    <source>
    </source>
</evidence>
<evidence type="ECO:0000305" key="4"/>
<feature type="chain" id="PRO_0000050122" description="PAB1-binding protein 2">
    <location>
        <begin position="1"/>
        <end position="413"/>
    </location>
</feature>
<feature type="domain" description="KH 1" evidence="1">
    <location>
        <begin position="66"/>
        <end position="130"/>
    </location>
</feature>
<feature type="domain" description="KH 2" evidence="1">
    <location>
        <begin position="148"/>
        <end position="213"/>
    </location>
</feature>
<feature type="domain" description="KH 3" evidence="1">
    <location>
        <begin position="330"/>
        <end position="394"/>
    </location>
</feature>
<feature type="region of interest" description="Disordered" evidence="2">
    <location>
        <begin position="1"/>
        <end position="36"/>
    </location>
</feature>
<feature type="compositionally biased region" description="Low complexity" evidence="2">
    <location>
        <begin position="1"/>
        <end position="23"/>
    </location>
</feature>
<name>PBP2_YEAST</name>
<reference key="1">
    <citation type="journal article" date="1994" name="EMBO J.">
        <title>Complete DNA sequence of yeast chromosome II.</title>
        <authorList>
            <person name="Feldmann H."/>
            <person name="Aigle M."/>
            <person name="Aljinovic G."/>
            <person name="Andre B."/>
            <person name="Baclet M.C."/>
            <person name="Barthe C."/>
            <person name="Baur A."/>
            <person name="Becam A.-M."/>
            <person name="Biteau N."/>
            <person name="Boles E."/>
            <person name="Brandt T."/>
            <person name="Brendel M."/>
            <person name="Brueckner M."/>
            <person name="Bussereau F."/>
            <person name="Christiansen C."/>
            <person name="Contreras R."/>
            <person name="Crouzet M."/>
            <person name="Cziepluch C."/>
            <person name="Demolis N."/>
            <person name="Delaveau T."/>
            <person name="Doignon F."/>
            <person name="Domdey H."/>
            <person name="Duesterhus S."/>
            <person name="Dubois E."/>
            <person name="Dujon B."/>
            <person name="El Bakkoury M."/>
            <person name="Entian K.-D."/>
            <person name="Feuermann M."/>
            <person name="Fiers W."/>
            <person name="Fobo G.M."/>
            <person name="Fritz C."/>
            <person name="Gassenhuber J."/>
            <person name="Glansdorff N."/>
            <person name="Goffeau A."/>
            <person name="Grivell L.A."/>
            <person name="de Haan M."/>
            <person name="Hein C."/>
            <person name="Herbert C.J."/>
            <person name="Hollenberg C.P."/>
            <person name="Holmstroem K."/>
            <person name="Jacq C."/>
            <person name="Jacquet M."/>
            <person name="Jauniaux J.-C."/>
            <person name="Jonniaux J.-L."/>
            <person name="Kallesoee T."/>
            <person name="Kiesau P."/>
            <person name="Kirchrath L."/>
            <person name="Koetter P."/>
            <person name="Korol S."/>
            <person name="Liebl S."/>
            <person name="Logghe M."/>
            <person name="Lohan A.J.E."/>
            <person name="Louis E.J."/>
            <person name="Li Z.Y."/>
            <person name="Maat M.J."/>
            <person name="Mallet L."/>
            <person name="Mannhaupt G."/>
            <person name="Messenguy F."/>
            <person name="Miosga T."/>
            <person name="Molemans F."/>
            <person name="Mueller S."/>
            <person name="Nasr F."/>
            <person name="Obermaier B."/>
            <person name="Perea J."/>
            <person name="Pierard A."/>
            <person name="Piravandi E."/>
            <person name="Pohl F.M."/>
            <person name="Pohl T.M."/>
            <person name="Potier S."/>
            <person name="Proft M."/>
            <person name="Purnelle B."/>
            <person name="Ramezani Rad M."/>
            <person name="Rieger M."/>
            <person name="Rose M."/>
            <person name="Schaaff-Gerstenschlaeger I."/>
            <person name="Scherens B."/>
            <person name="Schwarzlose C."/>
            <person name="Skala J."/>
            <person name="Slonimski P.P."/>
            <person name="Smits P.H.M."/>
            <person name="Souciet J.-L."/>
            <person name="Steensma H.Y."/>
            <person name="Stucka R."/>
            <person name="Urrestarazu L.A."/>
            <person name="van der Aart Q.J.M."/>
            <person name="Van Dyck L."/>
            <person name="Vassarotti A."/>
            <person name="Vetter I."/>
            <person name="Vierendeels F."/>
            <person name="Vissers S."/>
            <person name="Wagner G."/>
            <person name="de Wergifosse P."/>
            <person name="Wolfe K.H."/>
            <person name="Zagulski M."/>
            <person name="Zimmermann F.K."/>
            <person name="Mewes H.-W."/>
            <person name="Kleine K."/>
        </authorList>
    </citation>
    <scope>NUCLEOTIDE SEQUENCE [LARGE SCALE GENOMIC DNA]</scope>
    <source>
        <strain>ATCC 204508 / S288c</strain>
    </source>
</reference>
<reference key="2">
    <citation type="journal article" date="2014" name="G3 (Bethesda)">
        <title>The reference genome sequence of Saccharomyces cerevisiae: Then and now.</title>
        <authorList>
            <person name="Engel S.R."/>
            <person name="Dietrich F.S."/>
            <person name="Fisk D.G."/>
            <person name="Binkley G."/>
            <person name="Balakrishnan R."/>
            <person name="Costanzo M.C."/>
            <person name="Dwight S.S."/>
            <person name="Hitz B.C."/>
            <person name="Karra K."/>
            <person name="Nash R.S."/>
            <person name="Weng S."/>
            <person name="Wong E.D."/>
            <person name="Lloyd P."/>
            <person name="Skrzypek M.S."/>
            <person name="Miyasato S.R."/>
            <person name="Simison M."/>
            <person name="Cherry J.M."/>
        </authorList>
    </citation>
    <scope>GENOME REANNOTATION</scope>
    <source>
        <strain>ATCC 204508 / S288c</strain>
    </source>
</reference>
<reference key="3">
    <citation type="journal article" date="1998" name="Mol. Cell. Biol.">
        <title>Pbp1p, a factor interacting with Saccharomyces cerevisiae poly(A)-binding protein, regulates polyadenylation.</title>
        <authorList>
            <person name="Mangus D.A."/>
            <person name="Amrani N."/>
            <person name="Jacobson A."/>
        </authorList>
    </citation>
    <scope>PARTIAL CHARACTERIZATION</scope>
</reference>
<reference key="4">
    <citation type="journal article" date="2003" name="Nature">
        <title>Global analysis of protein expression in yeast.</title>
        <authorList>
            <person name="Ghaemmaghami S."/>
            <person name="Huh W.-K."/>
            <person name="Bower K."/>
            <person name="Howson R.W."/>
            <person name="Belle A."/>
            <person name="Dephoure N."/>
            <person name="O'Shea E.K."/>
            <person name="Weissman J.S."/>
        </authorList>
    </citation>
    <scope>LEVEL OF PROTEIN EXPRESSION [LARGE SCALE ANALYSIS]</scope>
</reference>
<reference key="5">
    <citation type="journal article" date="2007" name="J. Proteome Res.">
        <title>Large-scale phosphorylation analysis of alpha-factor-arrested Saccharomyces cerevisiae.</title>
        <authorList>
            <person name="Li X."/>
            <person name="Gerber S.A."/>
            <person name="Rudner A.D."/>
            <person name="Beausoleil S.A."/>
            <person name="Haas W."/>
            <person name="Villen J."/>
            <person name="Elias J.E."/>
            <person name="Gygi S.P."/>
        </authorList>
    </citation>
    <scope>IDENTIFICATION BY MASS SPECTROMETRY [LARGE SCALE ANALYSIS]</scope>
    <source>
        <strain>ADR376</strain>
    </source>
</reference>
<reference key="6">
    <citation type="journal article" date="2008" name="Mol. Cell. Proteomics">
        <title>A multidimensional chromatography technology for in-depth phosphoproteome analysis.</title>
        <authorList>
            <person name="Albuquerque C.P."/>
            <person name="Smolka M.B."/>
            <person name="Payne S.H."/>
            <person name="Bafna V."/>
            <person name="Eng J."/>
            <person name="Zhou H."/>
        </authorList>
    </citation>
    <scope>IDENTIFICATION BY MASS SPECTROMETRY [LARGE SCALE ANALYSIS]</scope>
</reference>
<reference key="7">
    <citation type="journal article" date="2009" name="Science">
        <title>Global analysis of Cdk1 substrate phosphorylation sites provides insights into evolution.</title>
        <authorList>
            <person name="Holt L.J."/>
            <person name="Tuch B.B."/>
            <person name="Villen J."/>
            <person name="Johnson A.D."/>
            <person name="Gygi S.P."/>
            <person name="Morgan D.O."/>
        </authorList>
    </citation>
    <scope>IDENTIFICATION BY MASS SPECTROMETRY [LARGE SCALE ANALYSIS]</scope>
</reference>
<dbReference type="EMBL" id="Z36101">
    <property type="protein sequence ID" value="CAA85196.1"/>
    <property type="molecule type" value="Genomic_DNA"/>
</dbReference>
<dbReference type="EMBL" id="BK006936">
    <property type="protein sequence ID" value="DAA07348.1"/>
    <property type="molecule type" value="Genomic_DNA"/>
</dbReference>
<dbReference type="PIR" id="S46109">
    <property type="entry name" value="S46109"/>
</dbReference>
<dbReference type="RefSeq" id="NP_009792.3">
    <property type="nucleotide sequence ID" value="NM_001178581.3"/>
</dbReference>
<dbReference type="SMR" id="P38151"/>
<dbReference type="BioGRID" id="32927">
    <property type="interactions" value="74"/>
</dbReference>
<dbReference type="DIP" id="DIP-4947N"/>
<dbReference type="FunCoup" id="P38151">
    <property type="interactions" value="897"/>
</dbReference>
<dbReference type="IntAct" id="P38151">
    <property type="interactions" value="19"/>
</dbReference>
<dbReference type="MINT" id="P38151"/>
<dbReference type="STRING" id="4932.YBR233W"/>
<dbReference type="iPTMnet" id="P38151"/>
<dbReference type="PaxDb" id="4932-YBR233W"/>
<dbReference type="PeptideAtlas" id="P38151"/>
<dbReference type="EnsemblFungi" id="YBR233W_mRNA">
    <property type="protein sequence ID" value="YBR233W"/>
    <property type="gene ID" value="YBR233W"/>
</dbReference>
<dbReference type="GeneID" id="852533"/>
<dbReference type="KEGG" id="sce:YBR233W"/>
<dbReference type="AGR" id="SGD:S000000437"/>
<dbReference type="SGD" id="S000000437">
    <property type="gene designation" value="PBP2"/>
</dbReference>
<dbReference type="VEuPathDB" id="FungiDB:YBR233W"/>
<dbReference type="eggNOG" id="KOG2190">
    <property type="taxonomic scope" value="Eukaryota"/>
</dbReference>
<dbReference type="HOGENOM" id="CLU_022670_9_0_1"/>
<dbReference type="InParanoid" id="P38151"/>
<dbReference type="OMA" id="MQVVPYS"/>
<dbReference type="OrthoDB" id="1937934at2759"/>
<dbReference type="BioCyc" id="YEAST:G3O-29164-MONOMER"/>
<dbReference type="BioGRID-ORCS" id="852533">
    <property type="hits" value="0 hits in 10 CRISPR screens"/>
</dbReference>
<dbReference type="CD-CODE" id="E03F929F">
    <property type="entry name" value="Stress granule"/>
</dbReference>
<dbReference type="PRO" id="PR:P38151"/>
<dbReference type="Proteomes" id="UP000002311">
    <property type="component" value="Chromosome II"/>
</dbReference>
<dbReference type="RNAct" id="P38151">
    <property type="molecule type" value="protein"/>
</dbReference>
<dbReference type="GO" id="GO:0005737">
    <property type="term" value="C:cytoplasm"/>
    <property type="evidence" value="ECO:0000314"/>
    <property type="project" value="SGD"/>
</dbReference>
<dbReference type="GO" id="GO:0005634">
    <property type="term" value="C:nucleus"/>
    <property type="evidence" value="ECO:0000314"/>
    <property type="project" value="SGD"/>
</dbReference>
<dbReference type="GO" id="GO:1990904">
    <property type="term" value="C:ribonucleoprotein complex"/>
    <property type="evidence" value="ECO:0007669"/>
    <property type="project" value="UniProtKB-KW"/>
</dbReference>
<dbReference type="GO" id="GO:0003729">
    <property type="term" value="F:mRNA binding"/>
    <property type="evidence" value="ECO:0000314"/>
    <property type="project" value="SGD"/>
</dbReference>
<dbReference type="GO" id="GO:0010468">
    <property type="term" value="P:regulation of gene expression"/>
    <property type="evidence" value="ECO:0000318"/>
    <property type="project" value="GO_Central"/>
</dbReference>
<dbReference type="GO" id="GO:0051252">
    <property type="term" value="P:regulation of RNA metabolic process"/>
    <property type="evidence" value="ECO:0000318"/>
    <property type="project" value="GO_Central"/>
</dbReference>
<dbReference type="GO" id="GO:0000723">
    <property type="term" value="P:telomere maintenance"/>
    <property type="evidence" value="ECO:0000316"/>
    <property type="project" value="SGD"/>
</dbReference>
<dbReference type="CDD" id="cd00105">
    <property type="entry name" value="KH-I"/>
    <property type="match status" value="1"/>
</dbReference>
<dbReference type="CDD" id="cd22438">
    <property type="entry name" value="KH-I_PCBP_rpt1"/>
    <property type="match status" value="1"/>
</dbReference>
<dbReference type="CDD" id="cd22456">
    <property type="entry name" value="KH-I_Rnc1_rpt2"/>
    <property type="match status" value="1"/>
</dbReference>
<dbReference type="FunFam" id="3.30.1370.10:FF:000099">
    <property type="entry name" value="Pbp2p"/>
    <property type="match status" value="1"/>
</dbReference>
<dbReference type="Gene3D" id="3.30.1370.10">
    <property type="entry name" value="K Homology domain, type 1"/>
    <property type="match status" value="3"/>
</dbReference>
<dbReference type="InterPro" id="IPR004087">
    <property type="entry name" value="KH_dom"/>
</dbReference>
<dbReference type="InterPro" id="IPR004088">
    <property type="entry name" value="KH_dom_type_1"/>
</dbReference>
<dbReference type="InterPro" id="IPR036612">
    <property type="entry name" value="KH_dom_type_1_sf"/>
</dbReference>
<dbReference type="PANTHER" id="PTHR10288">
    <property type="entry name" value="KH DOMAIN CONTAINING RNA BINDING PROTEIN"/>
    <property type="match status" value="1"/>
</dbReference>
<dbReference type="Pfam" id="PF00013">
    <property type="entry name" value="KH_1"/>
    <property type="match status" value="3"/>
</dbReference>
<dbReference type="SMART" id="SM00322">
    <property type="entry name" value="KH"/>
    <property type="match status" value="3"/>
</dbReference>
<dbReference type="SUPFAM" id="SSF54791">
    <property type="entry name" value="Eukaryotic type KH-domain (KH-domain type I)"/>
    <property type="match status" value="3"/>
</dbReference>
<dbReference type="PROSITE" id="PS50084">
    <property type="entry name" value="KH_TYPE_1"/>
    <property type="match status" value="3"/>
</dbReference>
<accession>P38151</accession>
<accession>D6VQM8</accession>